<dbReference type="EMBL" id="AF351129">
    <property type="protein sequence ID" value="AAL83921.1"/>
    <property type="molecule type" value="mRNA"/>
</dbReference>
<dbReference type="EMBL" id="BK000442">
    <property type="protein sequence ID" value="DAA00378.1"/>
    <property type="molecule type" value="mRNA"/>
</dbReference>
<dbReference type="EMBL" id="AE014296">
    <property type="protein sequence ID" value="AAF47700.1"/>
    <property type="molecule type" value="Genomic_DNA"/>
</dbReference>
<dbReference type="RefSeq" id="NP_001261347.1">
    <property type="nucleotide sequence ID" value="NM_001274418.2"/>
</dbReference>
<dbReference type="RefSeq" id="NP_001286925.1">
    <property type="nucleotide sequence ID" value="NM_001299996.1"/>
</dbReference>
<dbReference type="RefSeq" id="NP_647758.1">
    <property type="nucleotide sequence ID" value="NM_139501.4"/>
</dbReference>
<dbReference type="SMR" id="Q9VZW5"/>
<dbReference type="FunCoup" id="Q9VZW5">
    <property type="interactions" value="52"/>
</dbReference>
<dbReference type="STRING" id="7227.FBpp0309525"/>
<dbReference type="GlyCosmos" id="Q9VZW5">
    <property type="glycosylation" value="3 sites, No reported glycans"/>
</dbReference>
<dbReference type="GlyGen" id="Q9VZW5">
    <property type="glycosylation" value="3 sites"/>
</dbReference>
<dbReference type="PaxDb" id="7227-FBpp0072850"/>
<dbReference type="EnsemblMetazoa" id="FBtr0072980">
    <property type="protein sequence ID" value="FBpp0072850"/>
    <property type="gene ID" value="FBgn0035385"/>
</dbReference>
<dbReference type="EnsemblMetazoa" id="FBtr0332085">
    <property type="protein sequence ID" value="FBpp0304395"/>
    <property type="gene ID" value="FBgn0035385"/>
</dbReference>
<dbReference type="EnsemblMetazoa" id="FBtr0340706">
    <property type="protein sequence ID" value="FBpp0309525"/>
    <property type="gene ID" value="FBgn0035385"/>
</dbReference>
<dbReference type="GeneID" id="38357"/>
<dbReference type="KEGG" id="dme:Dmel_CG2114"/>
<dbReference type="AGR" id="FB:FBgn0035385"/>
<dbReference type="CTD" id="38357"/>
<dbReference type="FlyBase" id="FBgn0035385">
    <property type="gene designation" value="FMRFaR"/>
</dbReference>
<dbReference type="VEuPathDB" id="VectorBase:FBgn0035385"/>
<dbReference type="eggNOG" id="KOG3656">
    <property type="taxonomic scope" value="Eukaryota"/>
</dbReference>
<dbReference type="GeneTree" id="ENSGT00940000173102"/>
<dbReference type="HOGENOM" id="CLU_009579_24_7_1"/>
<dbReference type="InParanoid" id="Q9VZW5"/>
<dbReference type="OMA" id="MFPIGMI"/>
<dbReference type="OrthoDB" id="10011262at2759"/>
<dbReference type="PhylomeDB" id="Q9VZW5"/>
<dbReference type="BioGRID-ORCS" id="38357">
    <property type="hits" value="0 hits in 1 CRISPR screen"/>
</dbReference>
<dbReference type="ChiTaRS" id="FMRFaR">
    <property type="organism name" value="fly"/>
</dbReference>
<dbReference type="GenomeRNAi" id="38357"/>
<dbReference type="PRO" id="PR:Q9VZW5"/>
<dbReference type="Proteomes" id="UP000000803">
    <property type="component" value="Chromosome 3L"/>
</dbReference>
<dbReference type="Bgee" id="FBgn0035385">
    <property type="expression patterns" value="Expressed in medullary intrinsic neuron Mi1 (Drosophila) in insect head and 95 other cell types or tissues"/>
</dbReference>
<dbReference type="ExpressionAtlas" id="Q9VZW5">
    <property type="expression patterns" value="baseline and differential"/>
</dbReference>
<dbReference type="GO" id="GO:0016020">
    <property type="term" value="C:membrane"/>
    <property type="evidence" value="ECO:0000255"/>
    <property type="project" value="FlyBase"/>
</dbReference>
<dbReference type="GO" id="GO:0005886">
    <property type="term" value="C:plasma membrane"/>
    <property type="evidence" value="ECO:0000314"/>
    <property type="project" value="FlyBase"/>
</dbReference>
<dbReference type="GO" id="GO:0008188">
    <property type="term" value="F:neuropeptide receptor activity"/>
    <property type="evidence" value="ECO:0000353"/>
    <property type="project" value="FlyBase"/>
</dbReference>
<dbReference type="GO" id="GO:0001653">
    <property type="term" value="F:peptide receptor activity"/>
    <property type="evidence" value="ECO:0000314"/>
    <property type="project" value="FlyBase"/>
</dbReference>
<dbReference type="GO" id="GO:0008344">
    <property type="term" value="P:adult locomotory behavior"/>
    <property type="evidence" value="ECO:0000315"/>
    <property type="project" value="UniProtKB"/>
</dbReference>
<dbReference type="GO" id="GO:0002209">
    <property type="term" value="P:behavioral defense response"/>
    <property type="evidence" value="ECO:0000315"/>
    <property type="project" value="FlyBase"/>
</dbReference>
<dbReference type="GO" id="GO:0007629">
    <property type="term" value="P:flight behavior"/>
    <property type="evidence" value="ECO:0000315"/>
    <property type="project" value="UniProtKB"/>
</dbReference>
<dbReference type="GO" id="GO:0007186">
    <property type="term" value="P:G protein-coupled receptor signaling pathway"/>
    <property type="evidence" value="ECO:0000255"/>
    <property type="project" value="FlyBase"/>
</dbReference>
<dbReference type="GO" id="GO:0008345">
    <property type="term" value="P:larval locomotory behavior"/>
    <property type="evidence" value="ECO:0000315"/>
    <property type="project" value="FlyBase"/>
</dbReference>
<dbReference type="GO" id="GO:0007218">
    <property type="term" value="P:neuropeptide signaling pathway"/>
    <property type="evidence" value="ECO:0000314"/>
    <property type="project" value="FlyBase"/>
</dbReference>
<dbReference type="GO" id="GO:0007204">
    <property type="term" value="P:positive regulation of cytosolic calcium ion concentration"/>
    <property type="evidence" value="ECO:0000314"/>
    <property type="project" value="UniProtKB"/>
</dbReference>
<dbReference type="GO" id="GO:0032226">
    <property type="term" value="P:positive regulation of synaptic transmission, dopaminergic"/>
    <property type="evidence" value="ECO:0000315"/>
    <property type="project" value="UniProtKB"/>
</dbReference>
<dbReference type="CDD" id="cd14978">
    <property type="entry name" value="7tmA_FMRFamide_R-like"/>
    <property type="match status" value="1"/>
</dbReference>
<dbReference type="FunFam" id="1.20.1070.10:FF:000421">
    <property type="entry name" value="FMRFamide receptor"/>
    <property type="match status" value="1"/>
</dbReference>
<dbReference type="Gene3D" id="1.20.1070.10">
    <property type="entry name" value="Rhodopsin 7-helix transmembrane proteins"/>
    <property type="match status" value="1"/>
</dbReference>
<dbReference type="InterPro" id="IPR052954">
    <property type="entry name" value="GPCR-Ligand_Int"/>
</dbReference>
<dbReference type="InterPro" id="IPR000276">
    <property type="entry name" value="GPCR_Rhodpsn"/>
</dbReference>
<dbReference type="InterPro" id="IPR017452">
    <property type="entry name" value="GPCR_Rhodpsn_7TM"/>
</dbReference>
<dbReference type="PANTHER" id="PTHR46641:SF2">
    <property type="entry name" value="FMRFAMIDE RECEPTOR"/>
    <property type="match status" value="1"/>
</dbReference>
<dbReference type="PANTHER" id="PTHR46641">
    <property type="entry name" value="FMRFAMIDE RECEPTOR-RELATED"/>
    <property type="match status" value="1"/>
</dbReference>
<dbReference type="Pfam" id="PF00001">
    <property type="entry name" value="7tm_1"/>
    <property type="match status" value="1"/>
</dbReference>
<dbReference type="PRINTS" id="PR00237">
    <property type="entry name" value="GPCRRHODOPSN"/>
</dbReference>
<dbReference type="SUPFAM" id="SSF81321">
    <property type="entry name" value="Family A G protein-coupled receptor-like"/>
    <property type="match status" value="1"/>
</dbReference>
<dbReference type="PROSITE" id="PS50262">
    <property type="entry name" value="G_PROTEIN_RECEP_F1_2"/>
    <property type="match status" value="1"/>
</dbReference>
<organism>
    <name type="scientific">Drosophila melanogaster</name>
    <name type="common">Fruit fly</name>
    <dbReference type="NCBI Taxonomy" id="7227"/>
    <lineage>
        <taxon>Eukaryota</taxon>
        <taxon>Metazoa</taxon>
        <taxon>Ecdysozoa</taxon>
        <taxon>Arthropoda</taxon>
        <taxon>Hexapoda</taxon>
        <taxon>Insecta</taxon>
        <taxon>Pterygota</taxon>
        <taxon>Neoptera</taxon>
        <taxon>Endopterygota</taxon>
        <taxon>Diptera</taxon>
        <taxon>Brachycera</taxon>
        <taxon>Muscomorpha</taxon>
        <taxon>Ephydroidea</taxon>
        <taxon>Drosophilidae</taxon>
        <taxon>Drosophila</taxon>
        <taxon>Sophophora</taxon>
    </lineage>
</organism>
<evidence type="ECO:0000255" key="1"/>
<evidence type="ECO:0000255" key="2">
    <source>
        <dbReference type="PROSITE-ProRule" id="PRU00521"/>
    </source>
</evidence>
<evidence type="ECO:0000269" key="3">
    <source>
    </source>
</evidence>
<evidence type="ECO:0000269" key="4">
    <source>
    </source>
</evidence>
<evidence type="ECO:0000269" key="5">
    <source>
    </source>
</evidence>
<evidence type="ECO:0000269" key="6">
    <source>
    </source>
</evidence>
<evidence type="ECO:0000303" key="7">
    <source>
    </source>
</evidence>
<evidence type="ECO:0000303" key="8">
    <source>
    </source>
</evidence>
<evidence type="ECO:0000305" key="9"/>
<evidence type="ECO:0000312" key="10">
    <source>
        <dbReference type="EMBL" id="AAF47700.1"/>
    </source>
</evidence>
<evidence type="ECO:0000312" key="11">
    <source>
        <dbReference type="EMBL" id="AAL83921.1"/>
    </source>
</evidence>
<evidence type="ECO:0000312" key="12">
    <source>
        <dbReference type="EMBL" id="DAA00378.1"/>
    </source>
</evidence>
<evidence type="ECO:0000312" key="13">
    <source>
        <dbReference type="FlyBase" id="FBgn0035385"/>
    </source>
</evidence>
<comment type="function">
    <text evidence="4 5 6">A receptor for the FMRFamide peptides (PubMed:12218185, PubMed:12438685). Reacts with high affinity to FMRFamide and intrinsic FMRFamide-related peptides (PubMed:12218185, PubMed:12438685). By stimulating intracellular calcium signaling through the inositol 1,4,5-trisphosphate receptor, Itpr, in dopaminergic neurons, may be involved in the maintenance of neuronal excitability and in the regulation of flight bout duration (PubMed:30110323).</text>
</comment>
<comment type="subcellular location">
    <subcellularLocation>
        <location>Cell membrane</location>
        <topology>Multi-pass membrane protein</topology>
    </subcellularLocation>
</comment>
<comment type="tissue specificity">
    <text evidence="5 6">Expressed in ovaries, heads and bodies (PubMed:12438685). Expressed in dopaminergic neurons.</text>
</comment>
<comment type="developmental stage">
    <text evidence="4 6">Expressed throughout development; strongest in larvae and adults (PubMed:12218185). In larvae, expressed in trachea, brain, gut, fat body and Malpighian tubules (PubMed:30110323).</text>
</comment>
<comment type="disruption phenotype">
    <text evidence="6">Deficits in simulated flight behavior with fewer or shorter duration of wing beats in tethered flies (PubMed:30110323). Dopaminergic neuron-specific knockout leads to shorter flight duration (PubMed:30110323). RNAi-mediated knockdown, either in adults or during pupal development, results in similar deficits in simulated flight behavior, whereas knockdown during larval development has no effect on flight behavior in the adult (PubMed:30110323). Pan-neuronal or dopaminergic neuron-specific RNAi-mediated knockdown leads to significantly shorter flight bouts (PubMed:30110323).</text>
</comment>
<comment type="similarity">
    <text evidence="2">Belongs to the G-protein coupled receptor 1 family.</text>
</comment>
<sequence length="549" mass="61755">MSGTAVARLLLRLELPSPGVMPPPPTDYDYGGPISDDEFLASAMATEGPTVRYDLFPQNNSQPTLQIVLNHTEVQTDLQYPHYEDLGLDPDPNWTRICEDVYNPLLENNRIEFWVCGVLINIVGVLGILGNIISMIILSRPQMRSSINYLLTGLARCDTVLIITSILLFGIPSIYPYTGHFFGYYNYVYPFISPAVFPIGMIAQTASIYMTFTVTLERYVAVCHPLKARALCTYGRAKIYFIVCVCFSLAYNMPRFWEVLTVTYPEPGKDVILHCVRPSRLRRSETYINIYIHWCYLIVNYIIPFLTLAILNCLIYRQVKRANRERQRLSRSEKREIGLATMLLCVVIVFFMLNFLPLVLNISEAFYSTIDHKITKISNLLITINSSVNFLIYIIFGEKFKRIFLLIFFKRRLSRDQPDLIHYESSISNNGDGTLNHRSSGRFSRHGTQRSTTTTYLVATGGPGGGGCGGGGGNNSLNNVRLTQVSGSPGLVKIKRNRAPSPGPVVYFPAREMQRSASTTNSTTNNNTSIGYDWTLPDSKKLGHVSSGF</sequence>
<proteinExistence type="evidence at transcript level"/>
<feature type="chain" id="PRO_0000069442" description="FMRFamide receptor">
    <location>
        <begin position="1"/>
        <end position="549"/>
    </location>
</feature>
<feature type="topological domain" description="Extracellular" evidence="1">
    <location>
        <begin position="1"/>
        <end position="117"/>
    </location>
</feature>
<feature type="transmembrane region" description="Helical; Name=1" evidence="1">
    <location>
        <begin position="118"/>
        <end position="138"/>
    </location>
</feature>
<feature type="topological domain" description="Cytoplasmic" evidence="1">
    <location>
        <begin position="139"/>
        <end position="158"/>
    </location>
</feature>
<feature type="transmembrane region" description="Helical; Name=2" evidence="1">
    <location>
        <begin position="159"/>
        <end position="179"/>
    </location>
</feature>
<feature type="topological domain" description="Extracellular" evidence="1">
    <location>
        <begin position="180"/>
        <end position="181"/>
    </location>
</feature>
<feature type="transmembrane region" description="Helical; Name=3" evidence="1">
    <location>
        <begin position="182"/>
        <end position="202"/>
    </location>
</feature>
<feature type="topological domain" description="Cytoplasmic" evidence="1">
    <location>
        <begin position="203"/>
        <end position="238"/>
    </location>
</feature>
<feature type="transmembrane region" description="Helical; Name=4" evidence="1">
    <location>
        <begin position="239"/>
        <end position="259"/>
    </location>
</feature>
<feature type="topological domain" description="Extracellular" evidence="1">
    <location>
        <begin position="260"/>
        <end position="289"/>
    </location>
</feature>
<feature type="transmembrane region" description="Helical; Name=5" evidence="1">
    <location>
        <begin position="290"/>
        <end position="310"/>
    </location>
</feature>
<feature type="topological domain" description="Cytoplasmic" evidence="1">
    <location>
        <begin position="311"/>
        <end position="341"/>
    </location>
</feature>
<feature type="transmembrane region" description="Helical; Name=6" evidence="1">
    <location>
        <begin position="342"/>
        <end position="362"/>
    </location>
</feature>
<feature type="topological domain" description="Extracellular" evidence="1">
    <location>
        <begin position="363"/>
        <end position="376"/>
    </location>
</feature>
<feature type="transmembrane region" description="Helical; Name=7" evidence="1">
    <location>
        <begin position="377"/>
        <end position="397"/>
    </location>
</feature>
<feature type="topological domain" description="Cytoplasmic" evidence="1">
    <location>
        <begin position="398"/>
        <end position="549"/>
    </location>
</feature>
<feature type="glycosylation site" description="N-linked (GlcNAc...) asparagine" evidence="1">
    <location>
        <position position="59"/>
    </location>
</feature>
<feature type="glycosylation site" description="N-linked (GlcNAc...) asparagine" evidence="1">
    <location>
        <position position="70"/>
    </location>
</feature>
<feature type="glycosylation site" description="N-linked (GlcNAc...) asparagine" evidence="1">
    <location>
        <position position="93"/>
    </location>
</feature>
<accession>Q9VZW5</accession>
<name>FMAR_DROME</name>
<protein>
    <recommendedName>
        <fullName evidence="7">FMRFamide receptor</fullName>
        <shortName evidence="7">DFR</shortName>
        <shortName evidence="8">DrmFMRFa-R</shortName>
    </recommendedName>
</protein>
<reference evidence="9 11" key="1">
    <citation type="journal article" date="2002" name="Proc. Natl. Acad. Sci. U.S.A.">
        <title>Molecular cloning and functional expression of the first insect FMRFamide receptor.</title>
        <authorList>
            <person name="Cazzamali G."/>
            <person name="Grimmelikhuijzen C.J.P."/>
        </authorList>
    </citation>
    <scope>NUCLEOTIDE SEQUENCE [MRNA]</scope>
    <scope>FUNCTION</scope>
    <scope>DEVELOPMENTAL STAGE</scope>
    <source>
        <strain evidence="4">Canton-S</strain>
        <tissue evidence="4">Larva</tissue>
    </source>
</reference>
<reference evidence="9 12" key="2">
    <citation type="journal article" date="2002" name="Proc. Natl. Acad. Sci. U.S.A.">
        <title>Identification in Drosophila melanogaster of the invertebrate G protein-coupled FMRFamide receptor.</title>
        <authorList>
            <person name="Meeusen T."/>
            <person name="Mertens I."/>
            <person name="Clynen E."/>
            <person name="Baggerman G."/>
            <person name="Nichols R."/>
            <person name="Nachman R.J."/>
            <person name="Huybrechts R."/>
            <person name="De Loof A."/>
            <person name="Schoofs L."/>
        </authorList>
    </citation>
    <scope>NUCLEOTIDE SEQUENCE [MRNA]</scope>
    <scope>FUNCTION</scope>
    <scope>TISSUE SPECIFICITY</scope>
</reference>
<reference evidence="10" key="3">
    <citation type="journal article" date="2000" name="Science">
        <title>The genome sequence of Drosophila melanogaster.</title>
        <authorList>
            <person name="Adams M.D."/>
            <person name="Celniker S.E."/>
            <person name="Holt R.A."/>
            <person name="Evans C.A."/>
            <person name="Gocayne J.D."/>
            <person name="Amanatides P.G."/>
            <person name="Scherer S.E."/>
            <person name="Li P.W."/>
            <person name="Hoskins R.A."/>
            <person name="Galle R.F."/>
            <person name="George R.A."/>
            <person name="Lewis S.E."/>
            <person name="Richards S."/>
            <person name="Ashburner M."/>
            <person name="Henderson S.N."/>
            <person name="Sutton G.G."/>
            <person name="Wortman J.R."/>
            <person name="Yandell M.D."/>
            <person name="Zhang Q."/>
            <person name="Chen L.X."/>
            <person name="Brandon R.C."/>
            <person name="Rogers Y.-H.C."/>
            <person name="Blazej R.G."/>
            <person name="Champe M."/>
            <person name="Pfeiffer B.D."/>
            <person name="Wan K.H."/>
            <person name="Doyle C."/>
            <person name="Baxter E.G."/>
            <person name="Helt G."/>
            <person name="Nelson C.R."/>
            <person name="Miklos G.L.G."/>
            <person name="Abril J.F."/>
            <person name="Agbayani A."/>
            <person name="An H.-J."/>
            <person name="Andrews-Pfannkoch C."/>
            <person name="Baldwin D."/>
            <person name="Ballew R.M."/>
            <person name="Basu A."/>
            <person name="Baxendale J."/>
            <person name="Bayraktaroglu L."/>
            <person name="Beasley E.M."/>
            <person name="Beeson K.Y."/>
            <person name="Benos P.V."/>
            <person name="Berman B.P."/>
            <person name="Bhandari D."/>
            <person name="Bolshakov S."/>
            <person name="Borkova D."/>
            <person name="Botchan M.R."/>
            <person name="Bouck J."/>
            <person name="Brokstein P."/>
            <person name="Brottier P."/>
            <person name="Burtis K.C."/>
            <person name="Busam D.A."/>
            <person name="Butler H."/>
            <person name="Cadieu E."/>
            <person name="Center A."/>
            <person name="Chandra I."/>
            <person name="Cherry J.M."/>
            <person name="Cawley S."/>
            <person name="Dahlke C."/>
            <person name="Davenport L.B."/>
            <person name="Davies P."/>
            <person name="de Pablos B."/>
            <person name="Delcher A."/>
            <person name="Deng Z."/>
            <person name="Mays A.D."/>
            <person name="Dew I."/>
            <person name="Dietz S.M."/>
            <person name="Dodson K."/>
            <person name="Doup L.E."/>
            <person name="Downes M."/>
            <person name="Dugan-Rocha S."/>
            <person name="Dunkov B.C."/>
            <person name="Dunn P."/>
            <person name="Durbin K.J."/>
            <person name="Evangelista C.C."/>
            <person name="Ferraz C."/>
            <person name="Ferriera S."/>
            <person name="Fleischmann W."/>
            <person name="Fosler C."/>
            <person name="Gabrielian A.E."/>
            <person name="Garg N.S."/>
            <person name="Gelbart W.M."/>
            <person name="Glasser K."/>
            <person name="Glodek A."/>
            <person name="Gong F."/>
            <person name="Gorrell J.H."/>
            <person name="Gu Z."/>
            <person name="Guan P."/>
            <person name="Harris M."/>
            <person name="Harris N.L."/>
            <person name="Harvey D.A."/>
            <person name="Heiman T.J."/>
            <person name="Hernandez J.R."/>
            <person name="Houck J."/>
            <person name="Hostin D."/>
            <person name="Houston K.A."/>
            <person name="Howland T.J."/>
            <person name="Wei M.-H."/>
            <person name="Ibegwam C."/>
            <person name="Jalali M."/>
            <person name="Kalush F."/>
            <person name="Karpen G.H."/>
            <person name="Ke Z."/>
            <person name="Kennison J.A."/>
            <person name="Ketchum K.A."/>
            <person name="Kimmel B.E."/>
            <person name="Kodira C.D."/>
            <person name="Kraft C.L."/>
            <person name="Kravitz S."/>
            <person name="Kulp D."/>
            <person name="Lai Z."/>
            <person name="Lasko P."/>
            <person name="Lei Y."/>
            <person name="Levitsky A.A."/>
            <person name="Li J.H."/>
            <person name="Li Z."/>
            <person name="Liang Y."/>
            <person name="Lin X."/>
            <person name="Liu X."/>
            <person name="Mattei B."/>
            <person name="McIntosh T.C."/>
            <person name="McLeod M.P."/>
            <person name="McPherson D."/>
            <person name="Merkulov G."/>
            <person name="Milshina N.V."/>
            <person name="Mobarry C."/>
            <person name="Morris J."/>
            <person name="Moshrefi A."/>
            <person name="Mount S.M."/>
            <person name="Moy M."/>
            <person name="Murphy B."/>
            <person name="Murphy L."/>
            <person name="Muzny D.M."/>
            <person name="Nelson D.L."/>
            <person name="Nelson D.R."/>
            <person name="Nelson K.A."/>
            <person name="Nixon K."/>
            <person name="Nusskern D.R."/>
            <person name="Pacleb J.M."/>
            <person name="Palazzolo M."/>
            <person name="Pittman G.S."/>
            <person name="Pan S."/>
            <person name="Pollard J."/>
            <person name="Puri V."/>
            <person name="Reese M.G."/>
            <person name="Reinert K."/>
            <person name="Remington K."/>
            <person name="Saunders R.D.C."/>
            <person name="Scheeler F."/>
            <person name="Shen H."/>
            <person name="Shue B.C."/>
            <person name="Siden-Kiamos I."/>
            <person name="Simpson M."/>
            <person name="Skupski M.P."/>
            <person name="Smith T.J."/>
            <person name="Spier E."/>
            <person name="Spradling A.C."/>
            <person name="Stapleton M."/>
            <person name="Strong R."/>
            <person name="Sun E."/>
            <person name="Svirskas R."/>
            <person name="Tector C."/>
            <person name="Turner R."/>
            <person name="Venter E."/>
            <person name="Wang A.H."/>
            <person name="Wang X."/>
            <person name="Wang Z.-Y."/>
            <person name="Wassarman D.A."/>
            <person name="Weinstock G.M."/>
            <person name="Weissenbach J."/>
            <person name="Williams S.M."/>
            <person name="Woodage T."/>
            <person name="Worley K.C."/>
            <person name="Wu D."/>
            <person name="Yang S."/>
            <person name="Yao Q.A."/>
            <person name="Ye J."/>
            <person name="Yeh R.-F."/>
            <person name="Zaveri J.S."/>
            <person name="Zhan M."/>
            <person name="Zhang G."/>
            <person name="Zhao Q."/>
            <person name="Zheng L."/>
            <person name="Zheng X.H."/>
            <person name="Zhong F.N."/>
            <person name="Zhong W."/>
            <person name="Zhou X."/>
            <person name="Zhu S.C."/>
            <person name="Zhu X."/>
            <person name="Smith H.O."/>
            <person name="Gibbs R.A."/>
            <person name="Myers E.W."/>
            <person name="Rubin G.M."/>
            <person name="Venter J.C."/>
        </authorList>
    </citation>
    <scope>NUCLEOTIDE SEQUENCE [LARGE SCALE GENOMIC DNA]</scope>
    <source>
        <strain evidence="3">Berkeley</strain>
    </source>
</reference>
<reference evidence="9 10" key="4">
    <citation type="journal article" date="2002" name="Genome Biol.">
        <title>Annotation of the Drosophila melanogaster euchromatic genome: a systematic review.</title>
        <authorList>
            <person name="Misra S."/>
            <person name="Crosby M.A."/>
            <person name="Mungall C.J."/>
            <person name="Matthews B.B."/>
            <person name="Campbell K.S."/>
            <person name="Hradecky P."/>
            <person name="Huang Y."/>
            <person name="Kaminker J.S."/>
            <person name="Millburn G.H."/>
            <person name="Prochnik S.E."/>
            <person name="Smith C.D."/>
            <person name="Tupy J.L."/>
            <person name="Whitfield E.J."/>
            <person name="Bayraktaroglu L."/>
            <person name="Berman B.P."/>
            <person name="Bettencourt B.R."/>
            <person name="Celniker S.E."/>
            <person name="de Grey A.D.N.J."/>
            <person name="Drysdale R.A."/>
            <person name="Harris N.L."/>
            <person name="Richter J."/>
            <person name="Russo S."/>
            <person name="Schroeder A.J."/>
            <person name="Shu S.Q."/>
            <person name="Stapleton M."/>
            <person name="Yamada C."/>
            <person name="Ashburner M."/>
            <person name="Gelbart W.M."/>
            <person name="Rubin G.M."/>
            <person name="Lewis S.E."/>
        </authorList>
    </citation>
    <scope>GENOME REANNOTATION</scope>
    <source>
        <strain>Berkeley</strain>
    </source>
</reference>
<reference evidence="9" key="5">
    <citation type="journal article" date="2018" name="PLoS Genet.">
        <title>FMRFa receptor stimulated Ca2+ signals alter the activity of flight modulating central dopaminergic neurons in Drosophila melanogaster.</title>
        <authorList>
            <person name="Ravi P."/>
            <person name="Trivedi D."/>
            <person name="Hasan G."/>
        </authorList>
    </citation>
    <scope>FUNCTION</scope>
    <scope>TISSUE SPECIFICITY</scope>
    <scope>DISRUPTION PHENOTYPE</scope>
</reference>
<keyword id="KW-1003">Cell membrane</keyword>
<keyword id="KW-0297">G-protein coupled receptor</keyword>
<keyword id="KW-0325">Glycoprotein</keyword>
<keyword id="KW-0472">Membrane</keyword>
<keyword id="KW-0675">Receptor</keyword>
<keyword id="KW-1185">Reference proteome</keyword>
<keyword id="KW-0807">Transducer</keyword>
<keyword id="KW-0812">Transmembrane</keyword>
<keyword id="KW-1133">Transmembrane helix</keyword>
<gene>
    <name evidence="13" type="primary">FMRFaR</name>
    <name evidence="10" type="synonym">FR</name>
    <name evidence="13" type="ORF">CG2114</name>
</gene>